<gene>
    <name evidence="1" type="primary">moaC</name>
    <name type="ordered locus">HPAG1_0783</name>
</gene>
<proteinExistence type="inferred from homology"/>
<keyword id="KW-0456">Lyase</keyword>
<keyword id="KW-0501">Molybdenum cofactor biosynthesis</keyword>
<name>MOAC_HELPH</name>
<evidence type="ECO:0000255" key="1">
    <source>
        <dbReference type="HAMAP-Rule" id="MF_01224"/>
    </source>
</evidence>
<sequence length="158" mass="17259">MPLTHLNEENQPKMVDIGDKETTERIALASGRISMNKEAYDAIINHGVKKGPVLQTAIIAGIMGAKKTSELIPMCHPIMLNGVDIDILEEKETHSFKLYARVKTQAKTGVEMEALMSVSIGLLTIYDMVKAIDKSMTISGVMLEHKSGGKSGDYNAKK</sequence>
<dbReference type="EC" id="4.6.1.17" evidence="1"/>
<dbReference type="EMBL" id="CP000241">
    <property type="protein sequence ID" value="ABF84850.1"/>
    <property type="molecule type" value="Genomic_DNA"/>
</dbReference>
<dbReference type="RefSeq" id="WP_001131540.1">
    <property type="nucleotide sequence ID" value="NC_008086.1"/>
</dbReference>
<dbReference type="SMR" id="Q1CT72"/>
<dbReference type="KEGG" id="hpa:HPAG1_0783"/>
<dbReference type="HOGENOM" id="CLU_074693_1_1_7"/>
<dbReference type="UniPathway" id="UPA00344"/>
<dbReference type="GO" id="GO:0061799">
    <property type="term" value="F:cyclic pyranopterin monophosphate synthase activity"/>
    <property type="evidence" value="ECO:0007669"/>
    <property type="project" value="UniProtKB-UniRule"/>
</dbReference>
<dbReference type="GO" id="GO:0006777">
    <property type="term" value="P:Mo-molybdopterin cofactor biosynthetic process"/>
    <property type="evidence" value="ECO:0007669"/>
    <property type="project" value="UniProtKB-UniRule"/>
</dbReference>
<dbReference type="CDD" id="cd01420">
    <property type="entry name" value="MoaC_PE"/>
    <property type="match status" value="1"/>
</dbReference>
<dbReference type="Gene3D" id="3.30.70.640">
    <property type="entry name" value="Molybdopterin cofactor biosynthesis C (MoaC) domain"/>
    <property type="match status" value="1"/>
</dbReference>
<dbReference type="HAMAP" id="MF_01224_B">
    <property type="entry name" value="MoaC_B"/>
    <property type="match status" value="1"/>
</dbReference>
<dbReference type="InterPro" id="IPR023045">
    <property type="entry name" value="MoaC"/>
</dbReference>
<dbReference type="InterPro" id="IPR047594">
    <property type="entry name" value="MoaC_bact/euk"/>
</dbReference>
<dbReference type="InterPro" id="IPR036522">
    <property type="entry name" value="MoaC_sf"/>
</dbReference>
<dbReference type="InterPro" id="IPR050105">
    <property type="entry name" value="MoCo_biosynth_MoaA/MoaC"/>
</dbReference>
<dbReference type="InterPro" id="IPR002820">
    <property type="entry name" value="Mopterin_CF_biosynth-C_dom"/>
</dbReference>
<dbReference type="NCBIfam" id="TIGR00581">
    <property type="entry name" value="moaC"/>
    <property type="match status" value="1"/>
</dbReference>
<dbReference type="NCBIfam" id="NF006870">
    <property type="entry name" value="PRK09364.1"/>
    <property type="match status" value="1"/>
</dbReference>
<dbReference type="PANTHER" id="PTHR22960">
    <property type="entry name" value="MOLYBDOPTERIN COFACTOR SYNTHESIS PROTEIN A"/>
    <property type="match status" value="1"/>
</dbReference>
<dbReference type="Pfam" id="PF01967">
    <property type="entry name" value="MoaC"/>
    <property type="match status" value="1"/>
</dbReference>
<dbReference type="SUPFAM" id="SSF55040">
    <property type="entry name" value="Molybdenum cofactor biosynthesis protein C, MoaC"/>
    <property type="match status" value="1"/>
</dbReference>
<comment type="function">
    <text evidence="1">Catalyzes the conversion of (8S)-3',8-cyclo-7,8-dihydroguanosine 5'-triphosphate to cyclic pyranopterin monophosphate (cPMP).</text>
</comment>
<comment type="catalytic activity">
    <reaction evidence="1">
        <text>(8S)-3',8-cyclo-7,8-dihydroguanosine 5'-triphosphate = cyclic pyranopterin phosphate + diphosphate</text>
        <dbReference type="Rhea" id="RHEA:49580"/>
        <dbReference type="ChEBI" id="CHEBI:33019"/>
        <dbReference type="ChEBI" id="CHEBI:59648"/>
        <dbReference type="ChEBI" id="CHEBI:131766"/>
        <dbReference type="EC" id="4.6.1.17"/>
    </reaction>
</comment>
<comment type="pathway">
    <text evidence="1">Cofactor biosynthesis; molybdopterin biosynthesis.</text>
</comment>
<comment type="subunit">
    <text evidence="1">Homohexamer; trimer of dimers.</text>
</comment>
<comment type="similarity">
    <text evidence="1">Belongs to the MoaC family.</text>
</comment>
<organism>
    <name type="scientific">Helicobacter pylori (strain HPAG1)</name>
    <dbReference type="NCBI Taxonomy" id="357544"/>
    <lineage>
        <taxon>Bacteria</taxon>
        <taxon>Pseudomonadati</taxon>
        <taxon>Campylobacterota</taxon>
        <taxon>Epsilonproteobacteria</taxon>
        <taxon>Campylobacterales</taxon>
        <taxon>Helicobacteraceae</taxon>
        <taxon>Helicobacter</taxon>
    </lineage>
</organism>
<reference key="1">
    <citation type="journal article" date="2006" name="Proc. Natl. Acad. Sci. U.S.A.">
        <title>The complete genome sequence of a chronic atrophic gastritis Helicobacter pylori strain: evolution during disease progression.</title>
        <authorList>
            <person name="Oh J.D."/>
            <person name="Kling-Baeckhed H."/>
            <person name="Giannakis M."/>
            <person name="Xu J."/>
            <person name="Fulton R.S."/>
            <person name="Fulton L.A."/>
            <person name="Cordum H.S."/>
            <person name="Wang C."/>
            <person name="Elliott G."/>
            <person name="Edwards J."/>
            <person name="Mardis E.R."/>
            <person name="Engstrand L.G."/>
            <person name="Gordon J.I."/>
        </authorList>
    </citation>
    <scope>NUCLEOTIDE SEQUENCE [LARGE SCALE GENOMIC DNA]</scope>
    <source>
        <strain>HPAG1</strain>
    </source>
</reference>
<accession>Q1CT72</accession>
<feature type="chain" id="PRO_1000054102" description="Cyclic pyranopterin monophosphate synthase">
    <location>
        <begin position="1"/>
        <end position="158"/>
    </location>
</feature>
<feature type="active site" evidence="1">
    <location>
        <position position="127"/>
    </location>
</feature>
<feature type="binding site" evidence="1">
    <location>
        <begin position="74"/>
        <end position="76"/>
    </location>
    <ligand>
        <name>substrate</name>
    </ligand>
</feature>
<feature type="binding site" evidence="1">
    <location>
        <begin position="112"/>
        <end position="113"/>
    </location>
    <ligand>
        <name>substrate</name>
    </ligand>
</feature>
<protein>
    <recommendedName>
        <fullName evidence="1">Cyclic pyranopterin monophosphate synthase</fullName>
        <ecNumber evidence="1">4.6.1.17</ecNumber>
    </recommendedName>
    <alternativeName>
        <fullName evidence="1">Molybdenum cofactor biosynthesis protein C</fullName>
    </alternativeName>
</protein>